<dbReference type="EMBL" id="CP000448">
    <property type="protein sequence ID" value="ABI68941.1"/>
    <property type="molecule type" value="Genomic_DNA"/>
</dbReference>
<dbReference type="RefSeq" id="WP_011641039.1">
    <property type="nucleotide sequence ID" value="NC_008346.1"/>
</dbReference>
<dbReference type="SMR" id="Q0AWG3"/>
<dbReference type="STRING" id="335541.Swol_1642"/>
<dbReference type="KEGG" id="swo:Swol_1642"/>
<dbReference type="eggNOG" id="COG2003">
    <property type="taxonomic scope" value="Bacteria"/>
</dbReference>
<dbReference type="HOGENOM" id="CLU_073529_0_2_9"/>
<dbReference type="OrthoDB" id="9804482at2"/>
<dbReference type="Proteomes" id="UP000001968">
    <property type="component" value="Chromosome"/>
</dbReference>
<dbReference type="GO" id="GO:0046872">
    <property type="term" value="F:metal ion binding"/>
    <property type="evidence" value="ECO:0007669"/>
    <property type="project" value="UniProtKB-KW"/>
</dbReference>
<dbReference type="GO" id="GO:0008237">
    <property type="term" value="F:metallopeptidase activity"/>
    <property type="evidence" value="ECO:0007669"/>
    <property type="project" value="UniProtKB-KW"/>
</dbReference>
<dbReference type="GO" id="GO:0006508">
    <property type="term" value="P:proteolysis"/>
    <property type="evidence" value="ECO:0007669"/>
    <property type="project" value="UniProtKB-KW"/>
</dbReference>
<dbReference type="CDD" id="cd08071">
    <property type="entry name" value="MPN_DUF2466"/>
    <property type="match status" value="1"/>
</dbReference>
<dbReference type="Gene3D" id="1.10.150.20">
    <property type="entry name" value="5' to 3' exonuclease, C-terminal subdomain"/>
    <property type="match status" value="1"/>
</dbReference>
<dbReference type="Gene3D" id="3.40.140.10">
    <property type="entry name" value="Cytidine Deaminase, domain 2"/>
    <property type="match status" value="1"/>
</dbReference>
<dbReference type="InterPro" id="IPR037518">
    <property type="entry name" value="MPN"/>
</dbReference>
<dbReference type="InterPro" id="IPR025657">
    <property type="entry name" value="RadC_JAB"/>
</dbReference>
<dbReference type="InterPro" id="IPR010994">
    <property type="entry name" value="RuvA_2-like"/>
</dbReference>
<dbReference type="InterPro" id="IPR001405">
    <property type="entry name" value="UPF0758"/>
</dbReference>
<dbReference type="InterPro" id="IPR020891">
    <property type="entry name" value="UPF0758_CS"/>
</dbReference>
<dbReference type="InterPro" id="IPR046778">
    <property type="entry name" value="UPF0758_N"/>
</dbReference>
<dbReference type="NCBIfam" id="NF000642">
    <property type="entry name" value="PRK00024.1"/>
    <property type="match status" value="1"/>
</dbReference>
<dbReference type="NCBIfam" id="TIGR00608">
    <property type="entry name" value="radc"/>
    <property type="match status" value="1"/>
</dbReference>
<dbReference type="PANTHER" id="PTHR30471">
    <property type="entry name" value="DNA REPAIR PROTEIN RADC"/>
    <property type="match status" value="1"/>
</dbReference>
<dbReference type="PANTHER" id="PTHR30471:SF3">
    <property type="entry name" value="UPF0758 PROTEIN YEES-RELATED"/>
    <property type="match status" value="1"/>
</dbReference>
<dbReference type="Pfam" id="PF04002">
    <property type="entry name" value="RadC"/>
    <property type="match status" value="1"/>
</dbReference>
<dbReference type="Pfam" id="PF20582">
    <property type="entry name" value="UPF0758_N"/>
    <property type="match status" value="1"/>
</dbReference>
<dbReference type="SUPFAM" id="SSF47781">
    <property type="entry name" value="RuvA domain 2-like"/>
    <property type="match status" value="1"/>
</dbReference>
<dbReference type="PROSITE" id="PS50249">
    <property type="entry name" value="MPN"/>
    <property type="match status" value="1"/>
</dbReference>
<dbReference type="PROSITE" id="PS01302">
    <property type="entry name" value="UPF0758"/>
    <property type="match status" value="1"/>
</dbReference>
<comment type="similarity">
    <text evidence="2">Belongs to the UPF0758 family.</text>
</comment>
<protein>
    <recommendedName>
        <fullName>UPF0758 protein Swol_1642</fullName>
    </recommendedName>
</protein>
<feature type="chain" id="PRO_0000322706" description="UPF0758 protein Swol_1642">
    <location>
        <begin position="1"/>
        <end position="235"/>
    </location>
</feature>
<feature type="domain" description="MPN" evidence="1">
    <location>
        <begin position="109"/>
        <end position="235"/>
    </location>
</feature>
<feature type="short sequence motif" description="JAMM motif" evidence="1">
    <location>
        <begin position="184"/>
        <end position="197"/>
    </location>
</feature>
<feature type="binding site" evidence="1">
    <location>
        <position position="184"/>
    </location>
    <ligand>
        <name>Zn(2+)</name>
        <dbReference type="ChEBI" id="CHEBI:29105"/>
        <note>catalytic</note>
    </ligand>
</feature>
<feature type="binding site" evidence="1">
    <location>
        <position position="186"/>
    </location>
    <ligand>
        <name>Zn(2+)</name>
        <dbReference type="ChEBI" id="CHEBI:29105"/>
        <note>catalytic</note>
    </ligand>
</feature>
<feature type="binding site" evidence="1">
    <location>
        <position position="197"/>
    </location>
    <ligand>
        <name>Zn(2+)</name>
        <dbReference type="ChEBI" id="CHEBI:29105"/>
        <note>catalytic</note>
    </ligand>
</feature>
<name>Y1642_SYNWW</name>
<organism>
    <name type="scientific">Syntrophomonas wolfei subsp. wolfei (strain DSM 2245B / Goettingen)</name>
    <dbReference type="NCBI Taxonomy" id="335541"/>
    <lineage>
        <taxon>Bacteria</taxon>
        <taxon>Bacillati</taxon>
        <taxon>Bacillota</taxon>
        <taxon>Clostridia</taxon>
        <taxon>Eubacteriales</taxon>
        <taxon>Syntrophomonadaceae</taxon>
        <taxon>Syntrophomonas</taxon>
    </lineage>
</organism>
<sequence length="235" mass="26359">MNEYFVNLNIKEMPETMRPREKLIARGEDKLDEAELLAIVLGSGTREMNALELARQLLARHGGSLRFLMSATLEELTAEKGIGMAKAVSIKAAIEMGRRVVGNIQLRRIIKSPEDVQEAVRELAMEEMRHYDREHFRVLYLDRKGGLITMQDISIGGLHSSIVHPREVFKTAVKKSAASMILVHNHPSGDPTPSQEDIEITRRLIEAGKIMGIEILDHVIIGEINYCSLKARGLI</sequence>
<keyword id="KW-0378">Hydrolase</keyword>
<keyword id="KW-0479">Metal-binding</keyword>
<keyword id="KW-0482">Metalloprotease</keyword>
<keyword id="KW-0645">Protease</keyword>
<keyword id="KW-1185">Reference proteome</keyword>
<keyword id="KW-0862">Zinc</keyword>
<gene>
    <name type="ordered locus">Swol_1642</name>
</gene>
<reference key="1">
    <citation type="journal article" date="2010" name="Environ. Microbiol.">
        <title>The genome of Syntrophomonas wolfei: new insights into syntrophic metabolism and biohydrogen production.</title>
        <authorList>
            <person name="Sieber J.R."/>
            <person name="Sims D.R."/>
            <person name="Han C."/>
            <person name="Kim E."/>
            <person name="Lykidis A."/>
            <person name="Lapidus A.L."/>
            <person name="McDonnald E."/>
            <person name="Rohlin L."/>
            <person name="Culley D.E."/>
            <person name="Gunsalus R."/>
            <person name="McInerney M.J."/>
        </authorList>
    </citation>
    <scope>NUCLEOTIDE SEQUENCE [LARGE SCALE GENOMIC DNA]</scope>
    <source>
        <strain>DSM 2245B / Goettingen</strain>
    </source>
</reference>
<proteinExistence type="inferred from homology"/>
<evidence type="ECO:0000255" key="1">
    <source>
        <dbReference type="PROSITE-ProRule" id="PRU01182"/>
    </source>
</evidence>
<evidence type="ECO:0000305" key="2"/>
<accession>Q0AWG3</accession>